<feature type="initiator methionine" description="Removed" evidence="2">
    <location>
        <position position="1"/>
    </location>
</feature>
<feature type="chain" id="PRO_0000184513" description="D-cysteine desulfhydrase">
    <location>
        <begin position="2"/>
        <end position="328"/>
    </location>
</feature>
<feature type="modified residue" description="N6-(pyridoxal phosphate)lysine" evidence="1">
    <location>
        <position position="51"/>
    </location>
</feature>
<name>DCYD_ECOLI</name>
<comment type="function">
    <text evidence="1 3">Catalyzes the alpha,beta-elimination reaction of D-cysteine and of several D-cysteine derivatives. It could be a defense mechanism against D-cysteine. Can also catalyze the degradation of 3-chloro-D-alanine.</text>
</comment>
<comment type="catalytic activity">
    <reaction evidence="1 3">
        <text>D-cysteine + H2O = hydrogen sulfide + pyruvate + NH4(+) + H(+)</text>
        <dbReference type="Rhea" id="RHEA:11268"/>
        <dbReference type="ChEBI" id="CHEBI:15361"/>
        <dbReference type="ChEBI" id="CHEBI:15377"/>
        <dbReference type="ChEBI" id="CHEBI:15378"/>
        <dbReference type="ChEBI" id="CHEBI:28938"/>
        <dbReference type="ChEBI" id="CHEBI:29919"/>
        <dbReference type="ChEBI" id="CHEBI:35236"/>
        <dbReference type="EC" id="4.4.1.15"/>
    </reaction>
</comment>
<comment type="cofactor">
    <cofactor evidence="1 3">
        <name>pyridoxal 5'-phosphate</name>
        <dbReference type="ChEBI" id="CHEBI:597326"/>
    </cofactor>
</comment>
<comment type="biophysicochemical properties">
    <phDependence>
        <text evidence="3">Optimum pH is 9.0.</text>
    </phDependence>
    <temperatureDependence>
        <text evidence="3">Optimum temperature is 45 degrees Celsius.</text>
    </temperatureDependence>
</comment>
<comment type="subunit">
    <text evidence="4">Homodimer.</text>
</comment>
<comment type="interaction">
    <interactant intactId="EBI-562060">
        <id>P76316</id>
    </interactant>
    <interactant intactId="EBI-561432">
        <id>P0A761</id>
        <label>nanE</label>
    </interactant>
    <organismsDiffer>false</organismsDiffer>
    <experiments>2</experiments>
</comment>
<comment type="induction">
    <text evidence="2">By sulfate starvation.</text>
</comment>
<comment type="similarity">
    <text evidence="1">Belongs to the ACC deaminase/D-cysteine desulfhydrase family.</text>
</comment>
<proteinExistence type="evidence at protein level"/>
<gene>
    <name evidence="1" type="primary">dcyD</name>
    <name type="synonym">yedO</name>
    <name type="ordered locus">b1919</name>
    <name type="ordered locus">JW5313</name>
</gene>
<evidence type="ECO:0000255" key="1">
    <source>
        <dbReference type="HAMAP-Rule" id="MF_01045"/>
    </source>
</evidence>
<evidence type="ECO:0000269" key="2">
    <source>
    </source>
</evidence>
<evidence type="ECO:0000269" key="3">
    <source>
    </source>
</evidence>
<evidence type="ECO:0000305" key="4">
    <source>
    </source>
</evidence>
<organism>
    <name type="scientific">Escherichia coli (strain K12)</name>
    <dbReference type="NCBI Taxonomy" id="83333"/>
    <lineage>
        <taxon>Bacteria</taxon>
        <taxon>Pseudomonadati</taxon>
        <taxon>Pseudomonadota</taxon>
        <taxon>Gammaproteobacteria</taxon>
        <taxon>Enterobacterales</taxon>
        <taxon>Enterobacteriaceae</taxon>
        <taxon>Escherichia</taxon>
    </lineage>
</organism>
<protein>
    <recommendedName>
        <fullName evidence="1">D-cysteine desulfhydrase</fullName>
        <ecNumber evidence="1">4.4.1.15</ecNumber>
    </recommendedName>
</protein>
<keyword id="KW-0903">Direct protein sequencing</keyword>
<keyword id="KW-0456">Lyase</keyword>
<keyword id="KW-0663">Pyridoxal phosphate</keyword>
<keyword id="KW-1185">Reference proteome</keyword>
<keyword id="KW-0346">Stress response</keyword>
<dbReference type="EC" id="4.4.1.15" evidence="1"/>
<dbReference type="EMBL" id="U00096">
    <property type="protein sequence ID" value="AAC74986.2"/>
    <property type="molecule type" value="Genomic_DNA"/>
</dbReference>
<dbReference type="EMBL" id="AP009048">
    <property type="protein sequence ID" value="BAA15739.2"/>
    <property type="molecule type" value="Genomic_DNA"/>
</dbReference>
<dbReference type="PIR" id="D64955">
    <property type="entry name" value="D64955"/>
</dbReference>
<dbReference type="RefSeq" id="NP_416429.4">
    <property type="nucleotide sequence ID" value="NC_000913.3"/>
</dbReference>
<dbReference type="RefSeq" id="WP_001128215.1">
    <property type="nucleotide sequence ID" value="NZ_SSZK01000069.1"/>
</dbReference>
<dbReference type="SMR" id="P76316"/>
<dbReference type="BioGRID" id="4260752">
    <property type="interactions" value="15"/>
</dbReference>
<dbReference type="DIP" id="DIP-11847N"/>
<dbReference type="FunCoup" id="P76316">
    <property type="interactions" value="467"/>
</dbReference>
<dbReference type="IntAct" id="P76316">
    <property type="interactions" value="24"/>
</dbReference>
<dbReference type="STRING" id="511145.b1919"/>
<dbReference type="jPOST" id="P76316"/>
<dbReference type="PaxDb" id="511145-b1919"/>
<dbReference type="EnsemblBacteria" id="AAC74986">
    <property type="protein sequence ID" value="AAC74986"/>
    <property type="gene ID" value="b1919"/>
</dbReference>
<dbReference type="GeneID" id="75205835"/>
<dbReference type="GeneID" id="946831"/>
<dbReference type="KEGG" id="ecj:JW5313"/>
<dbReference type="KEGG" id="eco:b1919"/>
<dbReference type="KEGG" id="ecoc:C3026_10890"/>
<dbReference type="PATRIC" id="fig|1411691.4.peg.330"/>
<dbReference type="EchoBASE" id="EB3792"/>
<dbReference type="eggNOG" id="COG2515">
    <property type="taxonomic scope" value="Bacteria"/>
</dbReference>
<dbReference type="HOGENOM" id="CLU_048897_1_0_6"/>
<dbReference type="InParanoid" id="P76316"/>
<dbReference type="OMA" id="ERYHAGT"/>
<dbReference type="OrthoDB" id="9801249at2"/>
<dbReference type="PhylomeDB" id="P76316"/>
<dbReference type="BioCyc" id="EcoCyc:DCYSDESULF-MONOMER"/>
<dbReference type="BioCyc" id="MetaCyc:DCYSDESULF-MONOMER"/>
<dbReference type="PRO" id="PR:P76316"/>
<dbReference type="Proteomes" id="UP000000625">
    <property type="component" value="Chromosome"/>
</dbReference>
<dbReference type="GO" id="GO:0005829">
    <property type="term" value="C:cytosol"/>
    <property type="evidence" value="ECO:0000314"/>
    <property type="project" value="EcoCyc"/>
</dbReference>
<dbReference type="GO" id="GO:0019149">
    <property type="term" value="F:3-chloro-D-alanine dehydrochlorinase activity"/>
    <property type="evidence" value="ECO:0000314"/>
    <property type="project" value="EcoCyc"/>
</dbReference>
<dbReference type="GO" id="GO:0019148">
    <property type="term" value="F:D-cysteine desulfhydrase activity"/>
    <property type="evidence" value="ECO:0000314"/>
    <property type="project" value="EcoliWiki"/>
</dbReference>
<dbReference type="GO" id="GO:0042803">
    <property type="term" value="F:protein homodimerization activity"/>
    <property type="evidence" value="ECO:0000314"/>
    <property type="project" value="EcoCyc"/>
</dbReference>
<dbReference type="GO" id="GO:0030170">
    <property type="term" value="F:pyridoxal phosphate binding"/>
    <property type="evidence" value="ECO:0000314"/>
    <property type="project" value="EcoCyc"/>
</dbReference>
<dbReference type="GO" id="GO:0010438">
    <property type="term" value="P:cellular response to sulfur starvation"/>
    <property type="evidence" value="ECO:0000270"/>
    <property type="project" value="EcoCyc"/>
</dbReference>
<dbReference type="GO" id="GO:0046416">
    <property type="term" value="P:D-amino acid metabolic process"/>
    <property type="evidence" value="ECO:0000314"/>
    <property type="project" value="EcoliWiki"/>
</dbReference>
<dbReference type="GO" id="GO:0019447">
    <property type="term" value="P:D-cysteine catabolic process"/>
    <property type="evidence" value="ECO:0000315"/>
    <property type="project" value="EcoCyc"/>
</dbReference>
<dbReference type="GO" id="GO:0006790">
    <property type="term" value="P:sulfur compound metabolic process"/>
    <property type="evidence" value="ECO:0000314"/>
    <property type="project" value="EcoliWiki"/>
</dbReference>
<dbReference type="GO" id="GO:0006791">
    <property type="term" value="P:sulfur utilization"/>
    <property type="evidence" value="ECO:0000315"/>
    <property type="project" value="EcoCyc"/>
</dbReference>
<dbReference type="CDD" id="cd06449">
    <property type="entry name" value="ACCD"/>
    <property type="match status" value="1"/>
</dbReference>
<dbReference type="FunFam" id="3.40.50.1100:FF:000019">
    <property type="entry name" value="D-cysteine desulfhydrase"/>
    <property type="match status" value="1"/>
</dbReference>
<dbReference type="Gene3D" id="3.40.50.1100">
    <property type="match status" value="2"/>
</dbReference>
<dbReference type="HAMAP" id="MF_01045">
    <property type="entry name" value="D_Cys_desulfhydr"/>
    <property type="match status" value="1"/>
</dbReference>
<dbReference type="InterPro" id="IPR027278">
    <property type="entry name" value="ACCD_DCysDesulf"/>
</dbReference>
<dbReference type="InterPro" id="IPR005966">
    <property type="entry name" value="D-Cys_desShydrase"/>
</dbReference>
<dbReference type="InterPro" id="IPR023702">
    <property type="entry name" value="D_Cys_desulphydr_bac"/>
</dbReference>
<dbReference type="InterPro" id="IPR001926">
    <property type="entry name" value="TrpB-like_PALP"/>
</dbReference>
<dbReference type="InterPro" id="IPR036052">
    <property type="entry name" value="TrpB-like_PALP_sf"/>
</dbReference>
<dbReference type="NCBIfam" id="TIGR01275">
    <property type="entry name" value="ACC_deam_rel"/>
    <property type="match status" value="1"/>
</dbReference>
<dbReference type="NCBIfam" id="NF003029">
    <property type="entry name" value="PRK03910.1-1"/>
    <property type="match status" value="1"/>
</dbReference>
<dbReference type="NCBIfam" id="NF003030">
    <property type="entry name" value="PRK03910.1-3"/>
    <property type="match status" value="1"/>
</dbReference>
<dbReference type="NCBIfam" id="NF003032">
    <property type="entry name" value="PRK03910.1-5"/>
    <property type="match status" value="1"/>
</dbReference>
<dbReference type="PANTHER" id="PTHR43780">
    <property type="entry name" value="1-AMINOCYCLOPROPANE-1-CARBOXYLATE DEAMINASE-RELATED"/>
    <property type="match status" value="1"/>
</dbReference>
<dbReference type="PANTHER" id="PTHR43780:SF2">
    <property type="entry name" value="1-AMINOCYCLOPROPANE-1-CARBOXYLATE DEAMINASE-RELATED"/>
    <property type="match status" value="1"/>
</dbReference>
<dbReference type="Pfam" id="PF00291">
    <property type="entry name" value="PALP"/>
    <property type="match status" value="1"/>
</dbReference>
<dbReference type="PIRSF" id="PIRSF006278">
    <property type="entry name" value="ACCD_DCysDesulf"/>
    <property type="match status" value="1"/>
</dbReference>
<dbReference type="SUPFAM" id="SSF53686">
    <property type="entry name" value="Tryptophan synthase beta subunit-like PLP-dependent enzymes"/>
    <property type="match status" value="1"/>
</dbReference>
<accession>P76316</accession>
<accession>O08478</accession>
<accession>O08479</accession>
<reference key="1">
    <citation type="journal article" date="1996" name="DNA Res.">
        <title>A 460-kb DNA sequence of the Escherichia coli K-12 genome corresponding to the 40.1-50.0 min region on the linkage map.</title>
        <authorList>
            <person name="Itoh T."/>
            <person name="Aiba H."/>
            <person name="Baba T."/>
            <person name="Fujita K."/>
            <person name="Hayashi K."/>
            <person name="Inada T."/>
            <person name="Isono K."/>
            <person name="Kasai H."/>
            <person name="Kimura S."/>
            <person name="Kitakawa M."/>
            <person name="Kitagawa M."/>
            <person name="Makino K."/>
            <person name="Miki T."/>
            <person name="Mizobuchi K."/>
            <person name="Mori H."/>
            <person name="Mori T."/>
            <person name="Motomura K."/>
            <person name="Nakade S."/>
            <person name="Nakamura Y."/>
            <person name="Nashimoto H."/>
            <person name="Nishio Y."/>
            <person name="Oshima T."/>
            <person name="Saito N."/>
            <person name="Sampei G."/>
            <person name="Seki Y."/>
            <person name="Sivasundaram S."/>
            <person name="Tagami H."/>
            <person name="Takeda J."/>
            <person name="Takemoto K."/>
            <person name="Wada C."/>
            <person name="Yamamoto Y."/>
            <person name="Horiuchi T."/>
        </authorList>
    </citation>
    <scope>NUCLEOTIDE SEQUENCE [LARGE SCALE GENOMIC DNA]</scope>
    <source>
        <strain>K12 / W3110 / ATCC 27325 / DSM 5911</strain>
    </source>
</reference>
<reference key="2">
    <citation type="journal article" date="1997" name="Science">
        <title>The complete genome sequence of Escherichia coli K-12.</title>
        <authorList>
            <person name="Blattner F.R."/>
            <person name="Plunkett G. III"/>
            <person name="Bloch C.A."/>
            <person name="Perna N.T."/>
            <person name="Burland V."/>
            <person name="Riley M."/>
            <person name="Collado-Vides J."/>
            <person name="Glasner J.D."/>
            <person name="Rode C.K."/>
            <person name="Mayhew G.F."/>
            <person name="Gregor J."/>
            <person name="Davis N.W."/>
            <person name="Kirkpatrick H.A."/>
            <person name="Goeden M.A."/>
            <person name="Rose D.J."/>
            <person name="Mau B."/>
            <person name="Shao Y."/>
        </authorList>
    </citation>
    <scope>NUCLEOTIDE SEQUENCE [LARGE SCALE GENOMIC DNA]</scope>
    <source>
        <strain>K12 / MG1655 / ATCC 47076</strain>
    </source>
</reference>
<reference key="3">
    <citation type="journal article" date="2006" name="Mol. Syst. Biol.">
        <title>Highly accurate genome sequences of Escherichia coli K-12 strains MG1655 and W3110.</title>
        <authorList>
            <person name="Hayashi K."/>
            <person name="Morooka N."/>
            <person name="Yamamoto Y."/>
            <person name="Fujita K."/>
            <person name="Isono K."/>
            <person name="Choi S."/>
            <person name="Ohtsubo E."/>
            <person name="Baba T."/>
            <person name="Wanner B.L."/>
            <person name="Mori H."/>
            <person name="Horiuchi T."/>
        </authorList>
    </citation>
    <scope>NUCLEOTIDE SEQUENCE [LARGE SCALE GENOMIC DNA]</scope>
    <source>
        <strain>K12 / W3110 / ATCC 27325 / DSM 5911</strain>
    </source>
</reference>
<reference key="4">
    <citation type="journal article" date="2001" name="J. Biol. Chem.">
        <title>Role of D-cysteine desulfhydrase in the adaptation of Escherichia coli to D-cysteine.</title>
        <authorList>
            <person name="Soutourina J."/>
            <person name="Blanquet S."/>
            <person name="Plateau P."/>
        </authorList>
    </citation>
    <scope>PROTEIN SEQUENCE OF 2-9</scope>
    <scope>CHARACTERIZATION</scope>
    <scope>INDUCTION</scope>
    <source>
        <strain>K37</strain>
    </source>
</reference>
<reference key="5">
    <citation type="journal article" date="1985" name="Eur. J. Biochem.">
        <title>D-cysteine desulfhydrase of Escherichia coli. Purification and characterization.</title>
        <authorList>
            <person name="Nagasawa T."/>
            <person name="Ishii T."/>
            <person name="Kumagai H."/>
            <person name="Yamada H."/>
        </authorList>
    </citation>
    <scope>FUNCTION</scope>
    <scope>CATALYTIC ACTIVITY</scope>
    <scope>COFACTOR</scope>
    <scope>BIOPHYSICOCHEMICAL PROPERTIES</scope>
    <scope>SUBUNIT</scope>
    <source>
        <strain>K12 / W3110 / ATCC 27325 / DSM 5911</strain>
    </source>
</reference>
<sequence>MPLHNLTRFPRLEFIGAPTPLEYLPRFSDYLGREIFIKRDDVTPMAMGGNKLRKLEFLAADALREGADTLITAGAIQSNHVRQTAAVAAKLGLHCVALLENPIGTTAENYLTNGNRLLLDLFNTQIEMCDALTDPNAQLEELATRVEAQGFRPYVIPVGGSNALGALGYVESALEIAQQCEGAVNISSVVVASGSAGTHAGLAVGLEHLMPESELIGVTVSRSVADQLPKVVNLQQAIAKELELTASAEILLWDDYFAPGYGVPNDEGMEAVKLLARLEGILLDPVYTGKAMAGLIDGISQKRFKDEGPILFIHTGGAPALFAYHPHV</sequence>